<organism>
    <name type="scientific">Rickettsia massiliae (strain Mtu5)</name>
    <dbReference type="NCBI Taxonomy" id="416276"/>
    <lineage>
        <taxon>Bacteria</taxon>
        <taxon>Pseudomonadati</taxon>
        <taxon>Pseudomonadota</taxon>
        <taxon>Alphaproteobacteria</taxon>
        <taxon>Rickettsiales</taxon>
        <taxon>Rickettsiaceae</taxon>
        <taxon>Rickettsieae</taxon>
        <taxon>Rickettsia</taxon>
        <taxon>spotted fever group</taxon>
    </lineage>
</organism>
<proteinExistence type="inferred from homology"/>
<evidence type="ECO:0000255" key="1">
    <source>
        <dbReference type="HAMAP-Rule" id="MF_01341"/>
    </source>
</evidence>
<evidence type="ECO:0000256" key="2">
    <source>
        <dbReference type="SAM" id="MobiDB-lite"/>
    </source>
</evidence>
<evidence type="ECO:0000305" key="3"/>
<keyword id="KW-0687">Ribonucleoprotein</keyword>
<keyword id="KW-0689">Ribosomal protein</keyword>
<keyword id="KW-0694">RNA-binding</keyword>
<keyword id="KW-0699">rRNA-binding</keyword>
<sequence length="153" mass="16568">MKLNELYNNIGAKKNKKRIARGIGSGKGKTGGRGIKGQKSRSGVAIKGFEGGQTPMIKRLPKRGFNCISTKKYNIINIYNIEEALADGRLSADDTITKEKLVEAGVVNNKNNKKLVKLLSICSDDFTSPLSLKLDAYSAKAKDLIEKAGGKLL</sequence>
<dbReference type="EMBL" id="CP000683">
    <property type="protein sequence ID" value="ABV85064.1"/>
    <property type="molecule type" value="Genomic_DNA"/>
</dbReference>
<dbReference type="RefSeq" id="WP_012153030.1">
    <property type="nucleotide sequence ID" value="NC_009900.1"/>
</dbReference>
<dbReference type="SMR" id="A8F2C8"/>
<dbReference type="KEGG" id="rms:RMA_1021"/>
<dbReference type="HOGENOM" id="CLU_055188_4_0_5"/>
<dbReference type="Proteomes" id="UP000001311">
    <property type="component" value="Chromosome"/>
</dbReference>
<dbReference type="GO" id="GO:0015934">
    <property type="term" value="C:large ribosomal subunit"/>
    <property type="evidence" value="ECO:0007669"/>
    <property type="project" value="InterPro"/>
</dbReference>
<dbReference type="GO" id="GO:0019843">
    <property type="term" value="F:rRNA binding"/>
    <property type="evidence" value="ECO:0007669"/>
    <property type="project" value="UniProtKB-UniRule"/>
</dbReference>
<dbReference type="GO" id="GO:0003735">
    <property type="term" value="F:structural constituent of ribosome"/>
    <property type="evidence" value="ECO:0007669"/>
    <property type="project" value="InterPro"/>
</dbReference>
<dbReference type="GO" id="GO:0006412">
    <property type="term" value="P:translation"/>
    <property type="evidence" value="ECO:0007669"/>
    <property type="project" value="UniProtKB-UniRule"/>
</dbReference>
<dbReference type="Gene3D" id="3.100.10.10">
    <property type="match status" value="1"/>
</dbReference>
<dbReference type="HAMAP" id="MF_01341">
    <property type="entry name" value="Ribosomal_uL15"/>
    <property type="match status" value="1"/>
</dbReference>
<dbReference type="InterPro" id="IPR030878">
    <property type="entry name" value="Ribosomal_uL15"/>
</dbReference>
<dbReference type="InterPro" id="IPR021131">
    <property type="entry name" value="Ribosomal_uL15/eL18"/>
</dbReference>
<dbReference type="InterPro" id="IPR036227">
    <property type="entry name" value="Ribosomal_uL15/eL18_sf"/>
</dbReference>
<dbReference type="InterPro" id="IPR005749">
    <property type="entry name" value="Ribosomal_uL15_bac-type"/>
</dbReference>
<dbReference type="NCBIfam" id="TIGR01071">
    <property type="entry name" value="rplO_bact"/>
    <property type="match status" value="1"/>
</dbReference>
<dbReference type="PANTHER" id="PTHR12934">
    <property type="entry name" value="50S RIBOSOMAL PROTEIN L15"/>
    <property type="match status" value="1"/>
</dbReference>
<dbReference type="PANTHER" id="PTHR12934:SF11">
    <property type="entry name" value="LARGE RIBOSOMAL SUBUNIT PROTEIN UL15M"/>
    <property type="match status" value="1"/>
</dbReference>
<dbReference type="Pfam" id="PF00828">
    <property type="entry name" value="Ribosomal_L27A"/>
    <property type="match status" value="1"/>
</dbReference>
<dbReference type="SUPFAM" id="SSF52080">
    <property type="entry name" value="Ribosomal proteins L15p and L18e"/>
    <property type="match status" value="1"/>
</dbReference>
<feature type="chain" id="PRO_1000067668" description="Large ribosomal subunit protein uL15">
    <location>
        <begin position="1"/>
        <end position="153"/>
    </location>
</feature>
<feature type="region of interest" description="Disordered" evidence="2">
    <location>
        <begin position="21"/>
        <end position="41"/>
    </location>
</feature>
<feature type="compositionally biased region" description="Gly residues" evidence="2">
    <location>
        <begin position="23"/>
        <end position="35"/>
    </location>
</feature>
<accession>A8F2C8</accession>
<gene>
    <name evidence="1" type="primary">rplO</name>
    <name type="ordered locus">RMA_1021</name>
</gene>
<name>RL15_RICM5</name>
<protein>
    <recommendedName>
        <fullName evidence="1">Large ribosomal subunit protein uL15</fullName>
    </recommendedName>
    <alternativeName>
        <fullName evidence="3">50S ribosomal protein L15</fullName>
    </alternativeName>
</protein>
<reference key="1">
    <citation type="journal article" date="2007" name="Genome Res.">
        <title>Lateral gene transfer between obligate intracellular bacteria: evidence from the Rickettsia massiliae genome.</title>
        <authorList>
            <person name="Blanc G."/>
            <person name="Ogata H."/>
            <person name="Robert C."/>
            <person name="Audic S."/>
            <person name="Claverie J.-M."/>
            <person name="Raoult D."/>
        </authorList>
    </citation>
    <scope>NUCLEOTIDE SEQUENCE [LARGE SCALE GENOMIC DNA]</scope>
    <source>
        <strain>Mtu5</strain>
    </source>
</reference>
<comment type="function">
    <text evidence="1">Binds to the 23S rRNA.</text>
</comment>
<comment type="subunit">
    <text evidence="1">Part of the 50S ribosomal subunit.</text>
</comment>
<comment type="similarity">
    <text evidence="1">Belongs to the universal ribosomal protein uL15 family.</text>
</comment>